<proteinExistence type="inferred from homology"/>
<gene>
    <name type="primary">SPP2</name>
    <name type="ordered locus">AFR392C</name>
</gene>
<evidence type="ECO:0000250" key="1"/>
<evidence type="ECO:0000256" key="2">
    <source>
        <dbReference type="SAM" id="MobiDB-lite"/>
    </source>
</evidence>
<evidence type="ECO:0000305" key="3"/>
<comment type="function">
    <text evidence="1">Involved in spliceosome maturation and the first step of pre-mRNA splicing.</text>
</comment>
<comment type="subunit">
    <text evidence="1">Associated with the spliceosome.</text>
</comment>
<comment type="subcellular location">
    <subcellularLocation>
        <location evidence="1">Nucleus</location>
    </subcellularLocation>
</comment>
<comment type="similarity">
    <text evidence="3">Belongs to the SPP2 family.</text>
</comment>
<organism>
    <name type="scientific">Eremothecium gossypii (strain ATCC 10895 / CBS 109.51 / FGSC 9923 / NRRL Y-1056)</name>
    <name type="common">Yeast</name>
    <name type="synonym">Ashbya gossypii</name>
    <dbReference type="NCBI Taxonomy" id="284811"/>
    <lineage>
        <taxon>Eukaryota</taxon>
        <taxon>Fungi</taxon>
        <taxon>Dikarya</taxon>
        <taxon>Ascomycota</taxon>
        <taxon>Saccharomycotina</taxon>
        <taxon>Saccharomycetes</taxon>
        <taxon>Saccharomycetales</taxon>
        <taxon>Saccharomycetaceae</taxon>
        <taxon>Eremothecium</taxon>
    </lineage>
</organism>
<protein>
    <recommendedName>
        <fullName>Pre-mRNA-splicing factor SPP2</fullName>
    </recommendedName>
</protein>
<keyword id="KW-0507">mRNA processing</keyword>
<keyword id="KW-0508">mRNA splicing</keyword>
<keyword id="KW-0539">Nucleus</keyword>
<keyword id="KW-1185">Reference proteome</keyword>
<keyword id="KW-0747">Spliceosome</keyword>
<sequence>MSGISLNLKRKPKVKKKEEERKRKNVFNEDEVDPQKRSKILITEVNAHEAAKAKRRVIVPACSGRASIVPPKFASEQGPSYGLTESTGEQTGRPDKSAAKSGAGVVPLDQLPDPTGLEEYSEVPVEEFGAALLRGMGWDGDEEEIEGDRRGQKTVLPHEQAGRAEYLGIGASSDVDRSRKDARLQIEEFMPVVKVDRAKDTAADSST</sequence>
<name>SPP2_EREGS</name>
<dbReference type="EMBL" id="AE016819">
    <property type="protein sequence ID" value="AAS53763.1"/>
    <property type="molecule type" value="Genomic_DNA"/>
</dbReference>
<dbReference type="RefSeq" id="NP_985939.1">
    <property type="nucleotide sequence ID" value="NM_211294.1"/>
</dbReference>
<dbReference type="STRING" id="284811.Q753C4"/>
<dbReference type="EnsemblFungi" id="AAS53763">
    <property type="protein sequence ID" value="AAS53763"/>
    <property type="gene ID" value="AGOS_AFR392C"/>
</dbReference>
<dbReference type="GeneID" id="4622211"/>
<dbReference type="KEGG" id="ago:AGOS_AFR392C"/>
<dbReference type="eggNOG" id="ENOG502S8BR">
    <property type="taxonomic scope" value="Eukaryota"/>
</dbReference>
<dbReference type="HOGENOM" id="CLU_110336_0_0_1"/>
<dbReference type="InParanoid" id="Q753C4"/>
<dbReference type="OMA" id="SKIRITH"/>
<dbReference type="OrthoDB" id="5577072at2759"/>
<dbReference type="Proteomes" id="UP000000591">
    <property type="component" value="Chromosome VI"/>
</dbReference>
<dbReference type="GO" id="GO:0005681">
    <property type="term" value="C:spliceosomal complex"/>
    <property type="evidence" value="ECO:0007669"/>
    <property type="project" value="UniProtKB-KW"/>
</dbReference>
<dbReference type="GO" id="GO:0000398">
    <property type="term" value="P:mRNA splicing, via spliceosome"/>
    <property type="evidence" value="ECO:0007669"/>
    <property type="project" value="InterPro"/>
</dbReference>
<dbReference type="InterPro" id="IPR045166">
    <property type="entry name" value="Spp2-like"/>
</dbReference>
<dbReference type="InterPro" id="IPR026822">
    <property type="entry name" value="Spp2/MOS2_G-patch"/>
</dbReference>
<dbReference type="PANTHER" id="PTHR15818">
    <property type="entry name" value="G PATCH AND KOW-CONTAINING"/>
    <property type="match status" value="1"/>
</dbReference>
<dbReference type="PANTHER" id="PTHR15818:SF2">
    <property type="entry name" value="G-PATCH DOMAIN AND KOW MOTIFS-CONTAINING PROTEIN"/>
    <property type="match status" value="1"/>
</dbReference>
<dbReference type="Pfam" id="PF12656">
    <property type="entry name" value="G-patch_2"/>
    <property type="match status" value="1"/>
</dbReference>
<feature type="chain" id="PRO_0000218519" description="Pre-mRNA-splicing factor SPP2">
    <location>
        <begin position="1"/>
        <end position="207"/>
    </location>
</feature>
<feature type="region of interest" description="Disordered" evidence="2">
    <location>
        <begin position="1"/>
        <end position="37"/>
    </location>
</feature>
<feature type="region of interest" description="Disordered" evidence="2">
    <location>
        <begin position="68"/>
        <end position="121"/>
    </location>
</feature>
<reference key="1">
    <citation type="journal article" date="2004" name="Science">
        <title>The Ashbya gossypii genome as a tool for mapping the ancient Saccharomyces cerevisiae genome.</title>
        <authorList>
            <person name="Dietrich F.S."/>
            <person name="Voegeli S."/>
            <person name="Brachat S."/>
            <person name="Lerch A."/>
            <person name="Gates K."/>
            <person name="Steiner S."/>
            <person name="Mohr C."/>
            <person name="Poehlmann R."/>
            <person name="Luedi P."/>
            <person name="Choi S."/>
            <person name="Wing R.A."/>
            <person name="Flavier A."/>
            <person name="Gaffney T.D."/>
            <person name="Philippsen P."/>
        </authorList>
    </citation>
    <scope>NUCLEOTIDE SEQUENCE [LARGE SCALE GENOMIC DNA]</scope>
    <source>
        <strain>ATCC 10895 / CBS 109.51 / FGSC 9923 / NRRL Y-1056</strain>
    </source>
</reference>
<reference key="2">
    <citation type="journal article" date="2013" name="G3 (Bethesda)">
        <title>Genomes of Ashbya fungi isolated from insects reveal four mating-type loci, numerous translocations, lack of transposons, and distinct gene duplications.</title>
        <authorList>
            <person name="Dietrich F.S."/>
            <person name="Voegeli S."/>
            <person name="Kuo S."/>
            <person name="Philippsen P."/>
        </authorList>
    </citation>
    <scope>GENOME REANNOTATION</scope>
    <source>
        <strain>ATCC 10895 / CBS 109.51 / FGSC 9923 / NRRL Y-1056</strain>
    </source>
</reference>
<accession>Q753C4</accession>